<accession>A5VSI5</accession>
<name>OBG_BRUO2</name>
<evidence type="ECO:0000255" key="1">
    <source>
        <dbReference type="HAMAP-Rule" id="MF_01454"/>
    </source>
</evidence>
<evidence type="ECO:0000255" key="2">
    <source>
        <dbReference type="PROSITE-ProRule" id="PRU01231"/>
    </source>
</evidence>
<evidence type="ECO:0000305" key="3"/>
<proteinExistence type="inferred from homology"/>
<comment type="function">
    <text evidence="1">An essential GTPase which binds GTP, GDP and possibly (p)ppGpp with moderate affinity, with high nucleotide exchange rates and a fairly low GTP hydrolysis rate. Plays a role in control of the cell cycle, stress response, ribosome biogenesis and in those bacteria that undergo differentiation, in morphogenesis control.</text>
</comment>
<comment type="cofactor">
    <cofactor evidence="1">
        <name>Mg(2+)</name>
        <dbReference type="ChEBI" id="CHEBI:18420"/>
    </cofactor>
</comment>
<comment type="subunit">
    <text evidence="1">Monomer.</text>
</comment>
<comment type="subcellular location">
    <subcellularLocation>
        <location evidence="1">Cytoplasm</location>
    </subcellularLocation>
</comment>
<comment type="similarity">
    <text evidence="1">Belongs to the TRAFAC class OBG-HflX-like GTPase superfamily. OBG GTPase family.</text>
</comment>
<comment type="sequence caution" evidence="3">
    <conflict type="erroneous initiation">
        <sequence resource="EMBL-CDS" id="ABQ61598"/>
    </conflict>
    <text>Extended N-terminus.</text>
</comment>
<sequence>MKFLDQAKIYIRSGNGGAGAVSFRREKFLEFGGPDGGDGGRGGDVWVEAVDGLNTLIDYRYQQHFKAKTGMHGMGRNMTGGKGDDVVLRVPVGTQIFEEDNETLICDITEVGQRYRLAKGGNGGFGNLHFTTSTNRAPRRANPGQEGIERTIWLRLKLIADAGLVGLPNAGKSTFLASVTAAKPKIADYPFTTLHPNLGVARIDGREFVIADIPGLIEGASEGVGLGDRFLGHVERTRVLLHLVSAQEEDVAKAYQVIRGELEAYEHGLADKPEIVALSQVDTLDPETRKAKVKALKKACGCEPLLLSAVSHEGLNDTLRQLARIIDLSRAEEAGTAQAEE</sequence>
<feature type="chain" id="PRO_0000385770" description="GTPase Obg">
    <location>
        <begin position="1"/>
        <end position="341"/>
    </location>
</feature>
<feature type="domain" description="Obg" evidence="2">
    <location>
        <begin position="1"/>
        <end position="159"/>
    </location>
</feature>
<feature type="domain" description="OBG-type G" evidence="1">
    <location>
        <begin position="160"/>
        <end position="327"/>
    </location>
</feature>
<feature type="binding site" evidence="1">
    <location>
        <begin position="166"/>
        <end position="173"/>
    </location>
    <ligand>
        <name>GTP</name>
        <dbReference type="ChEBI" id="CHEBI:37565"/>
    </ligand>
</feature>
<feature type="binding site" evidence="1">
    <location>
        <position position="173"/>
    </location>
    <ligand>
        <name>Mg(2+)</name>
        <dbReference type="ChEBI" id="CHEBI:18420"/>
    </ligand>
</feature>
<feature type="binding site" evidence="1">
    <location>
        <begin position="191"/>
        <end position="195"/>
    </location>
    <ligand>
        <name>GTP</name>
        <dbReference type="ChEBI" id="CHEBI:37565"/>
    </ligand>
</feature>
<feature type="binding site" evidence="1">
    <location>
        <position position="193"/>
    </location>
    <ligand>
        <name>Mg(2+)</name>
        <dbReference type="ChEBI" id="CHEBI:18420"/>
    </ligand>
</feature>
<feature type="binding site" evidence="1">
    <location>
        <begin position="212"/>
        <end position="215"/>
    </location>
    <ligand>
        <name>GTP</name>
        <dbReference type="ChEBI" id="CHEBI:37565"/>
    </ligand>
</feature>
<feature type="binding site" evidence="1">
    <location>
        <begin position="279"/>
        <end position="282"/>
    </location>
    <ligand>
        <name>GTP</name>
        <dbReference type="ChEBI" id="CHEBI:37565"/>
    </ligand>
</feature>
<feature type="binding site" evidence="1">
    <location>
        <begin position="308"/>
        <end position="310"/>
    </location>
    <ligand>
        <name>GTP</name>
        <dbReference type="ChEBI" id="CHEBI:37565"/>
    </ligand>
</feature>
<organism>
    <name type="scientific">Brucella ovis (strain ATCC 25840 / 63/290 / NCTC 10512)</name>
    <dbReference type="NCBI Taxonomy" id="444178"/>
    <lineage>
        <taxon>Bacteria</taxon>
        <taxon>Pseudomonadati</taxon>
        <taxon>Pseudomonadota</taxon>
        <taxon>Alphaproteobacteria</taxon>
        <taxon>Hyphomicrobiales</taxon>
        <taxon>Brucellaceae</taxon>
        <taxon>Brucella/Ochrobactrum group</taxon>
        <taxon>Brucella</taxon>
    </lineage>
</organism>
<reference key="1">
    <citation type="journal article" date="2009" name="PLoS ONE">
        <title>Genome degradation in Brucella ovis corresponds with narrowing of its host range and tissue tropism.</title>
        <authorList>
            <person name="Tsolis R.M."/>
            <person name="Seshadri R."/>
            <person name="Santos R.L."/>
            <person name="Sangari F.J."/>
            <person name="Lobo J.M."/>
            <person name="de Jong M.F."/>
            <person name="Ren Q."/>
            <person name="Myers G."/>
            <person name="Brinkac L.M."/>
            <person name="Nelson W.C."/>
            <person name="Deboy R.T."/>
            <person name="Angiuoli S."/>
            <person name="Khouri H."/>
            <person name="Dimitrov G."/>
            <person name="Robinson J.R."/>
            <person name="Mulligan S."/>
            <person name="Walker R.L."/>
            <person name="Elzer P.E."/>
            <person name="Hassan K.A."/>
            <person name="Paulsen I.T."/>
        </authorList>
    </citation>
    <scope>NUCLEOTIDE SEQUENCE [LARGE SCALE GENOMIC DNA]</scope>
    <source>
        <strain>ATCC 25840 / 63/290 / NCTC 10512</strain>
    </source>
</reference>
<protein>
    <recommendedName>
        <fullName evidence="1">GTPase Obg</fullName>
        <ecNumber evidence="1">3.6.5.-</ecNumber>
    </recommendedName>
    <alternativeName>
        <fullName evidence="1">GTP-binding protein Obg</fullName>
    </alternativeName>
</protein>
<keyword id="KW-0963">Cytoplasm</keyword>
<keyword id="KW-0342">GTP-binding</keyword>
<keyword id="KW-0378">Hydrolase</keyword>
<keyword id="KW-0460">Magnesium</keyword>
<keyword id="KW-0479">Metal-binding</keyword>
<keyword id="KW-0547">Nucleotide-binding</keyword>
<dbReference type="EC" id="3.6.5.-" evidence="1"/>
<dbReference type="EMBL" id="CP000708">
    <property type="protein sequence ID" value="ABQ61598.1"/>
    <property type="status" value="ALT_INIT"/>
    <property type="molecule type" value="Genomic_DNA"/>
</dbReference>
<dbReference type="SMR" id="A5VSI5"/>
<dbReference type="KEGG" id="bov:BOV_1778"/>
<dbReference type="HOGENOM" id="CLU_011747_2_0_5"/>
<dbReference type="PhylomeDB" id="A5VSI5"/>
<dbReference type="Proteomes" id="UP000006383">
    <property type="component" value="Chromosome I"/>
</dbReference>
<dbReference type="GO" id="GO:0005737">
    <property type="term" value="C:cytoplasm"/>
    <property type="evidence" value="ECO:0007669"/>
    <property type="project" value="UniProtKB-SubCell"/>
</dbReference>
<dbReference type="GO" id="GO:0005525">
    <property type="term" value="F:GTP binding"/>
    <property type="evidence" value="ECO:0007669"/>
    <property type="project" value="UniProtKB-UniRule"/>
</dbReference>
<dbReference type="GO" id="GO:0003924">
    <property type="term" value="F:GTPase activity"/>
    <property type="evidence" value="ECO:0007669"/>
    <property type="project" value="UniProtKB-UniRule"/>
</dbReference>
<dbReference type="GO" id="GO:0000287">
    <property type="term" value="F:magnesium ion binding"/>
    <property type="evidence" value="ECO:0007669"/>
    <property type="project" value="InterPro"/>
</dbReference>
<dbReference type="GO" id="GO:0042254">
    <property type="term" value="P:ribosome biogenesis"/>
    <property type="evidence" value="ECO:0007669"/>
    <property type="project" value="UniProtKB-UniRule"/>
</dbReference>
<dbReference type="CDD" id="cd01898">
    <property type="entry name" value="Obg"/>
    <property type="match status" value="1"/>
</dbReference>
<dbReference type="FunFam" id="2.70.210.12:FF:000001">
    <property type="entry name" value="GTPase Obg"/>
    <property type="match status" value="1"/>
</dbReference>
<dbReference type="Gene3D" id="2.70.210.12">
    <property type="entry name" value="GTP1/OBG domain"/>
    <property type="match status" value="1"/>
</dbReference>
<dbReference type="Gene3D" id="3.40.50.300">
    <property type="entry name" value="P-loop containing nucleotide triphosphate hydrolases"/>
    <property type="match status" value="1"/>
</dbReference>
<dbReference type="HAMAP" id="MF_01454">
    <property type="entry name" value="GTPase_Obg"/>
    <property type="match status" value="1"/>
</dbReference>
<dbReference type="InterPro" id="IPR031167">
    <property type="entry name" value="G_OBG"/>
</dbReference>
<dbReference type="InterPro" id="IPR006073">
    <property type="entry name" value="GTP-bd"/>
</dbReference>
<dbReference type="InterPro" id="IPR014100">
    <property type="entry name" value="GTP-bd_Obg/CgtA"/>
</dbReference>
<dbReference type="InterPro" id="IPR006074">
    <property type="entry name" value="GTP1-OBG_CS"/>
</dbReference>
<dbReference type="InterPro" id="IPR006169">
    <property type="entry name" value="GTP1_OBG_dom"/>
</dbReference>
<dbReference type="InterPro" id="IPR036726">
    <property type="entry name" value="GTP1_OBG_dom_sf"/>
</dbReference>
<dbReference type="InterPro" id="IPR045086">
    <property type="entry name" value="OBG_GTPase"/>
</dbReference>
<dbReference type="InterPro" id="IPR027417">
    <property type="entry name" value="P-loop_NTPase"/>
</dbReference>
<dbReference type="NCBIfam" id="TIGR02729">
    <property type="entry name" value="Obg_CgtA"/>
    <property type="match status" value="1"/>
</dbReference>
<dbReference type="NCBIfam" id="NF008955">
    <property type="entry name" value="PRK12297.1"/>
    <property type="match status" value="1"/>
</dbReference>
<dbReference type="NCBIfam" id="NF008956">
    <property type="entry name" value="PRK12299.1"/>
    <property type="match status" value="1"/>
</dbReference>
<dbReference type="PANTHER" id="PTHR11702">
    <property type="entry name" value="DEVELOPMENTALLY REGULATED GTP-BINDING PROTEIN-RELATED"/>
    <property type="match status" value="1"/>
</dbReference>
<dbReference type="PANTHER" id="PTHR11702:SF31">
    <property type="entry name" value="MITOCHONDRIAL RIBOSOME-ASSOCIATED GTPASE 2"/>
    <property type="match status" value="1"/>
</dbReference>
<dbReference type="Pfam" id="PF01018">
    <property type="entry name" value="GTP1_OBG"/>
    <property type="match status" value="1"/>
</dbReference>
<dbReference type="Pfam" id="PF01926">
    <property type="entry name" value="MMR_HSR1"/>
    <property type="match status" value="1"/>
</dbReference>
<dbReference type="PIRSF" id="PIRSF002401">
    <property type="entry name" value="GTP_bd_Obg/CgtA"/>
    <property type="match status" value="1"/>
</dbReference>
<dbReference type="PRINTS" id="PR00326">
    <property type="entry name" value="GTP1OBG"/>
</dbReference>
<dbReference type="SUPFAM" id="SSF82051">
    <property type="entry name" value="Obg GTP-binding protein N-terminal domain"/>
    <property type="match status" value="1"/>
</dbReference>
<dbReference type="SUPFAM" id="SSF52540">
    <property type="entry name" value="P-loop containing nucleoside triphosphate hydrolases"/>
    <property type="match status" value="1"/>
</dbReference>
<dbReference type="PROSITE" id="PS51710">
    <property type="entry name" value="G_OBG"/>
    <property type="match status" value="1"/>
</dbReference>
<dbReference type="PROSITE" id="PS00905">
    <property type="entry name" value="GTP1_OBG"/>
    <property type="match status" value="1"/>
</dbReference>
<dbReference type="PROSITE" id="PS51883">
    <property type="entry name" value="OBG"/>
    <property type="match status" value="1"/>
</dbReference>
<gene>
    <name evidence="1" type="primary">obg</name>
    <name type="ordered locus">BOV_1778</name>
</gene>